<gene>
    <name evidence="1" type="primary">rpmH</name>
    <name type="ordered locus">SEN3656</name>
</gene>
<reference key="1">
    <citation type="journal article" date="2008" name="Genome Res.">
        <title>Comparative genome analysis of Salmonella enteritidis PT4 and Salmonella gallinarum 287/91 provides insights into evolutionary and host adaptation pathways.</title>
        <authorList>
            <person name="Thomson N.R."/>
            <person name="Clayton D.J."/>
            <person name="Windhorst D."/>
            <person name="Vernikos G."/>
            <person name="Davidson S."/>
            <person name="Churcher C."/>
            <person name="Quail M.A."/>
            <person name="Stevens M."/>
            <person name="Jones M.A."/>
            <person name="Watson M."/>
            <person name="Barron A."/>
            <person name="Layton A."/>
            <person name="Pickard D."/>
            <person name="Kingsley R.A."/>
            <person name="Bignell A."/>
            <person name="Clark L."/>
            <person name="Harris B."/>
            <person name="Ormond D."/>
            <person name="Abdellah Z."/>
            <person name="Brooks K."/>
            <person name="Cherevach I."/>
            <person name="Chillingworth T."/>
            <person name="Woodward J."/>
            <person name="Norberczak H."/>
            <person name="Lord A."/>
            <person name="Arrowsmith C."/>
            <person name="Jagels K."/>
            <person name="Moule S."/>
            <person name="Mungall K."/>
            <person name="Saunders M."/>
            <person name="Whitehead S."/>
            <person name="Chabalgoity J.A."/>
            <person name="Maskell D."/>
            <person name="Humphreys T."/>
            <person name="Roberts M."/>
            <person name="Barrow P.A."/>
            <person name="Dougan G."/>
            <person name="Parkhill J."/>
        </authorList>
    </citation>
    <scope>NUCLEOTIDE SEQUENCE [LARGE SCALE GENOMIC DNA]</scope>
    <source>
        <strain>P125109</strain>
    </source>
</reference>
<accession>B5QUQ1</accession>
<name>RL34_SALEP</name>
<feature type="chain" id="PRO_1000196101" description="Large ribosomal subunit protein bL34">
    <location>
        <begin position="1"/>
        <end position="46"/>
    </location>
</feature>
<keyword id="KW-0687">Ribonucleoprotein</keyword>
<keyword id="KW-0689">Ribosomal protein</keyword>
<evidence type="ECO:0000255" key="1">
    <source>
        <dbReference type="HAMAP-Rule" id="MF_00391"/>
    </source>
</evidence>
<evidence type="ECO:0000305" key="2"/>
<dbReference type="EMBL" id="AM933172">
    <property type="protein sequence ID" value="CAR35232.1"/>
    <property type="molecule type" value="Genomic_DNA"/>
</dbReference>
<dbReference type="RefSeq" id="WP_000831330.1">
    <property type="nucleotide sequence ID" value="NC_011294.1"/>
</dbReference>
<dbReference type="SMR" id="B5QUQ1"/>
<dbReference type="GeneID" id="98190980"/>
<dbReference type="KEGG" id="set:SEN3656"/>
<dbReference type="HOGENOM" id="CLU_129938_2_1_6"/>
<dbReference type="Proteomes" id="UP000000613">
    <property type="component" value="Chromosome"/>
</dbReference>
<dbReference type="GO" id="GO:1990904">
    <property type="term" value="C:ribonucleoprotein complex"/>
    <property type="evidence" value="ECO:0007669"/>
    <property type="project" value="UniProtKB-KW"/>
</dbReference>
<dbReference type="GO" id="GO:0005840">
    <property type="term" value="C:ribosome"/>
    <property type="evidence" value="ECO:0007669"/>
    <property type="project" value="UniProtKB-KW"/>
</dbReference>
<dbReference type="GO" id="GO:0003735">
    <property type="term" value="F:structural constituent of ribosome"/>
    <property type="evidence" value="ECO:0007669"/>
    <property type="project" value="InterPro"/>
</dbReference>
<dbReference type="GO" id="GO:0006412">
    <property type="term" value="P:translation"/>
    <property type="evidence" value="ECO:0007669"/>
    <property type="project" value="UniProtKB-UniRule"/>
</dbReference>
<dbReference type="FunFam" id="1.10.287.3980:FF:000001">
    <property type="entry name" value="Mitochondrial ribosomal protein L34"/>
    <property type="match status" value="1"/>
</dbReference>
<dbReference type="Gene3D" id="1.10.287.3980">
    <property type="match status" value="1"/>
</dbReference>
<dbReference type="HAMAP" id="MF_00391">
    <property type="entry name" value="Ribosomal_bL34"/>
    <property type="match status" value="1"/>
</dbReference>
<dbReference type="InterPro" id="IPR000271">
    <property type="entry name" value="Ribosomal_bL34"/>
</dbReference>
<dbReference type="InterPro" id="IPR020939">
    <property type="entry name" value="Ribosomal_bL34_CS"/>
</dbReference>
<dbReference type="NCBIfam" id="TIGR01030">
    <property type="entry name" value="rpmH_bact"/>
    <property type="match status" value="1"/>
</dbReference>
<dbReference type="PANTHER" id="PTHR14503:SF4">
    <property type="entry name" value="LARGE RIBOSOMAL SUBUNIT PROTEIN BL34M"/>
    <property type="match status" value="1"/>
</dbReference>
<dbReference type="PANTHER" id="PTHR14503">
    <property type="entry name" value="MITOCHONDRIAL RIBOSOMAL PROTEIN 34 FAMILY MEMBER"/>
    <property type="match status" value="1"/>
</dbReference>
<dbReference type="Pfam" id="PF00468">
    <property type="entry name" value="Ribosomal_L34"/>
    <property type="match status" value="1"/>
</dbReference>
<dbReference type="PROSITE" id="PS00784">
    <property type="entry name" value="RIBOSOMAL_L34"/>
    <property type="match status" value="1"/>
</dbReference>
<organism>
    <name type="scientific">Salmonella enteritidis PT4 (strain P125109)</name>
    <dbReference type="NCBI Taxonomy" id="550537"/>
    <lineage>
        <taxon>Bacteria</taxon>
        <taxon>Pseudomonadati</taxon>
        <taxon>Pseudomonadota</taxon>
        <taxon>Gammaproteobacteria</taxon>
        <taxon>Enterobacterales</taxon>
        <taxon>Enterobacteriaceae</taxon>
        <taxon>Salmonella</taxon>
    </lineage>
</organism>
<proteinExistence type="inferred from homology"/>
<comment type="similarity">
    <text evidence="1">Belongs to the bacterial ribosomal protein bL34 family.</text>
</comment>
<sequence>MKRTFQPSVLKRNRSHGFRARMATKNGRQVLARRRAKGRARLTVSK</sequence>
<protein>
    <recommendedName>
        <fullName evidence="1">Large ribosomal subunit protein bL34</fullName>
    </recommendedName>
    <alternativeName>
        <fullName evidence="2">50S ribosomal protein L34</fullName>
    </alternativeName>
</protein>